<keyword id="KW-0489">Methyltransferase</keyword>
<keyword id="KW-0949">S-adenosyl-L-methionine</keyword>
<keyword id="KW-0808">Transferase</keyword>
<protein>
    <recommendedName>
        <fullName evidence="3">Methyltransferase pytC</fullName>
        <ecNumber evidence="5">2.1.1.-</ecNumber>
    </recommendedName>
    <alternativeName>
        <fullName evidence="3">Pyranterreones biosynthesis cluster protein C</fullName>
    </alternativeName>
</protein>
<feature type="chain" id="PRO_0000450468" description="Methyltransferase pytC">
    <location>
        <begin position="1"/>
        <end position="324"/>
    </location>
</feature>
<feature type="region of interest" description="Disordered" evidence="1">
    <location>
        <begin position="1"/>
        <end position="28"/>
    </location>
</feature>
<evidence type="ECO:0000256" key="1">
    <source>
        <dbReference type="SAM" id="MobiDB-lite"/>
    </source>
</evidence>
<evidence type="ECO:0000269" key="2">
    <source>
    </source>
</evidence>
<evidence type="ECO:0000303" key="3">
    <source>
    </source>
</evidence>
<evidence type="ECO:0000305" key="4"/>
<evidence type="ECO:0000305" key="5">
    <source>
    </source>
</evidence>
<reference key="1">
    <citation type="submission" date="2019-10" db="EMBL/GenBank/DDBJ databases">
        <title>Aspergillus terreus TN-484 whole genome shotgun sequence.</title>
        <authorList>
            <person name="Kanamasa S."/>
            <person name="Takahashi H."/>
        </authorList>
    </citation>
    <scope>NUCLEOTIDE SEQUENCE [GENOMIC DNA]</scope>
    <source>
        <strain>TN-484</strain>
    </source>
</reference>
<reference key="2">
    <citation type="journal article" date="2020" name="J. Nat. Prod.">
        <title>Discovery and characterization of a PKS-NRPS hybrid in Aspergillus terreus by genome mining.</title>
        <authorList>
            <person name="Tang S."/>
            <person name="Zhang W."/>
            <person name="Li Z."/>
            <person name="Li H."/>
            <person name="Geng C."/>
            <person name="Huang X."/>
            <person name="Lu X."/>
        </authorList>
    </citation>
    <scope>NUCLEOTIDE SEQUENCE [GENOMIC DNA]</scope>
    <scope>INDUCTION</scope>
    <scope>FUNCTION</scope>
    <scope>DISRUPTION PHENOTYPE</scope>
    <scope>PATHWAY</scope>
    <source>
        <strain>MEFC01</strain>
    </source>
</reference>
<accession>P9WEZ3</accession>
<accession>A0A5M3YT69</accession>
<dbReference type="EC" id="2.1.1.-" evidence="5"/>
<dbReference type="EMBL" id="BKZM02000003">
    <property type="protein sequence ID" value="GES59607.1"/>
    <property type="molecule type" value="Genomic_DNA"/>
</dbReference>
<dbReference type="EMBL" id="MN699962">
    <property type="protein sequence ID" value="QIH14020.1"/>
    <property type="molecule type" value="Genomic_DNA"/>
</dbReference>
<dbReference type="SMR" id="P9WEZ3"/>
<dbReference type="VEuPathDB" id="FungiDB:ATEG_00912"/>
<dbReference type="OrthoDB" id="2013972at2759"/>
<dbReference type="GO" id="GO:0008168">
    <property type="term" value="F:methyltransferase activity"/>
    <property type="evidence" value="ECO:0007669"/>
    <property type="project" value="UniProtKB-KW"/>
</dbReference>
<dbReference type="GO" id="GO:0032259">
    <property type="term" value="P:methylation"/>
    <property type="evidence" value="ECO:0007669"/>
    <property type="project" value="UniProtKB-KW"/>
</dbReference>
<dbReference type="CDD" id="cd02440">
    <property type="entry name" value="AdoMet_MTases"/>
    <property type="match status" value="1"/>
</dbReference>
<dbReference type="Gene3D" id="3.40.50.150">
    <property type="entry name" value="Vaccinia Virus protein VP39"/>
    <property type="match status" value="1"/>
</dbReference>
<dbReference type="InterPro" id="IPR029063">
    <property type="entry name" value="SAM-dependent_MTases_sf"/>
</dbReference>
<dbReference type="PANTHER" id="PTHR43591:SF10">
    <property type="entry name" value="ABC TRANSMEMBRANE TYPE-1 DOMAIN-CONTAINING PROTEIN-RELATED"/>
    <property type="match status" value="1"/>
</dbReference>
<dbReference type="PANTHER" id="PTHR43591">
    <property type="entry name" value="METHYLTRANSFERASE"/>
    <property type="match status" value="1"/>
</dbReference>
<dbReference type="Pfam" id="PF13489">
    <property type="entry name" value="Methyltransf_23"/>
    <property type="match status" value="1"/>
</dbReference>
<dbReference type="SUPFAM" id="SSF53335">
    <property type="entry name" value="S-adenosyl-L-methionine-dependent methyltransferases"/>
    <property type="match status" value="1"/>
</dbReference>
<comment type="function">
    <text evidence="2 5">Methyltransferase; part of the gene cluster that mediates the biosynthesis of pyranterreones, a family of antioxidative compounds (PubMed:32077283). The first step of pyranonigrins biosynthesis is performed by the hybrid PKS-NRPS synthetase pytA that condenses 4 malonyl-CoA units ato the acetyl starter unit by the modular PKS of pytA (PubMed:32077283). The acyl chain is then connected to an L-serine through the amide bond by the modular NRPS of pytA (PubMed:32077283). A tetramic acid is formed and released from the PKS-NRPS pytA to give pyranterreone 5 with the help of the thioesterase pytI (PubMed:32077283). Pyranterreone 5 could be methylated by pytC to afford pyranterreone 6 (Probable). Both pyranterreones 5 and 6 are subsequently oxidized by the FAD-linked oxidoreductase pytB and the cytochrome P450 monooxygenase pytD to form the fused gamma-pyrone core, resulting in pyranterreones 7 and 11, respectively (PubMed:32077283). The hydroxy group at C-8 of pyranterreones 7 and 11 are dehydrated by the aspartyl protease pytH to form a delta-7 double bond to give pyranterreones 3 and 1, 2 accordingly (PubMed:32077283). The exo-methylene of pyranterreone 3 could be reduced into a pendant methyl by reductase pytE to provide pyranterreone 4, also known as cordylactam (Probable). Pyranterreone 4 can be reconverted to pyranterreone 3 through pytB-catalyzed dehydrogenation or further oxidized to pyranterreones 9 and 10 (Probable).</text>
</comment>
<comment type="pathway">
    <text evidence="2">Secondary metabolite biosynthesis.</text>
</comment>
<comment type="induction">
    <text evidence="2">Expression is positively regulated by the cluster-specific transcription factor pytR.</text>
</comment>
<comment type="disruption phenotype">
    <text evidence="2">Abolishes the production of most pyranterreones, but accumulates pyranterreone 5.</text>
</comment>
<comment type="similarity">
    <text evidence="4">Belongs to the methyltransferase superfamily. LaeA methyltransferase family.</text>
</comment>
<sequence>MTVRTAAEPPNRIEVDMDAPSLDTDSSCTSLSSSVQRYEYKHGRRYHGYHAGSYPFPNDKREQDRLDMIHHLYTRILNDRLFLAPLDPRGKAILDIGTGTGIWALHMGDAHPAARLIVGNDLSPIQPSWAPANVRFVVDDVEKDWVDRHPYDFIHCRYMAGSIKDWPRLIRQCYAHLRPGGWLELQESVNVMYSEDGTLPPDSFMARMMHGLIVACEKIGRTMDPAPSMEKWVQEAGFDPITKHRFKIPVGSWPKDPRLKECGSLMRVNFVEGVEAFTASLFTEVLGWTPEEVAVLNTGVREEAMRNDIHAIFDFVVIVAQKPY</sequence>
<organism>
    <name type="scientific">Aspergillus terreus</name>
    <dbReference type="NCBI Taxonomy" id="33178"/>
    <lineage>
        <taxon>Eukaryota</taxon>
        <taxon>Fungi</taxon>
        <taxon>Dikarya</taxon>
        <taxon>Ascomycota</taxon>
        <taxon>Pezizomycotina</taxon>
        <taxon>Eurotiomycetes</taxon>
        <taxon>Eurotiomycetidae</taxon>
        <taxon>Eurotiales</taxon>
        <taxon>Aspergillaceae</taxon>
        <taxon>Aspergillus</taxon>
        <taxon>Aspergillus subgen. Circumdati</taxon>
    </lineage>
</organism>
<name>PYTC_ASPTE</name>
<gene>
    <name evidence="3" type="primary">pytC</name>
    <name type="ORF">ATEG_00912</name>
    <name type="ORF">ATETN484_0003083300</name>
</gene>
<proteinExistence type="evidence at transcript level"/>